<evidence type="ECO:0000305" key="1"/>
<dbReference type="EMBL" id="DQ347959">
    <property type="protein sequence ID" value="ABC56364.1"/>
    <property type="molecule type" value="Genomic_DNA"/>
</dbReference>
<dbReference type="EMBL" id="DQ347959">
    <property type="protein sequence ID" value="ABC56343.1"/>
    <property type="molecule type" value="Genomic_DNA"/>
</dbReference>
<dbReference type="EMBL" id="AM087200">
    <property type="protein sequence ID" value="CAJ32437.1"/>
    <property type="molecule type" value="Genomic_DNA"/>
</dbReference>
<dbReference type="EMBL" id="AM087200">
    <property type="protein sequence ID" value="CAJ32457.1"/>
    <property type="molecule type" value="Genomic_DNA"/>
</dbReference>
<dbReference type="EMBL" id="S66464">
    <property type="status" value="NOT_ANNOTATED_CDS"/>
    <property type="molecule type" value="Genomic_DNA"/>
</dbReference>
<dbReference type="RefSeq" id="AP_004971.1">
    <property type="nucleotide sequence ID" value="AC_000188.1"/>
</dbReference>
<dbReference type="RefSeq" id="AP_004991.1">
    <property type="nucleotide sequence ID" value="AC_000188.1"/>
</dbReference>
<dbReference type="RefSeq" id="XP_004228571.1">
    <property type="nucleotide sequence ID" value="XM_004228523.3"/>
</dbReference>
<dbReference type="FunCoup" id="P61242">
    <property type="interactions" value="15"/>
</dbReference>
<dbReference type="STRING" id="4081.P61242"/>
<dbReference type="PaxDb" id="4081-Solyc01g007640.2.1"/>
<dbReference type="KEGG" id="sly:3950378"/>
<dbReference type="KEGG" id="sly:3950481"/>
<dbReference type="eggNOG" id="ENOG502QRDV">
    <property type="taxonomic scope" value="Eukaryota"/>
</dbReference>
<dbReference type="HOGENOM" id="CLU_235036_0_0_1"/>
<dbReference type="InParanoid" id="P61242"/>
<dbReference type="OrthoDB" id="1669967at2759"/>
<dbReference type="PhylomeDB" id="P61242"/>
<dbReference type="Proteomes" id="UP000004994">
    <property type="component" value="Chloroplast"/>
</dbReference>
<dbReference type="ExpressionAtlas" id="P61242">
    <property type="expression patterns" value="baseline and differential"/>
</dbReference>
<dbReference type="GO" id="GO:0009570">
    <property type="term" value="C:chloroplast stroma"/>
    <property type="evidence" value="ECO:0007669"/>
    <property type="project" value="UniProtKB-SubCell"/>
</dbReference>
<dbReference type="GO" id="GO:0009575">
    <property type="term" value="C:chromoplast stroma"/>
    <property type="evidence" value="ECO:0007669"/>
    <property type="project" value="UniProtKB-SubCell"/>
</dbReference>
<dbReference type="GO" id="GO:0005524">
    <property type="term" value="F:ATP binding"/>
    <property type="evidence" value="ECO:0007669"/>
    <property type="project" value="UniProtKB-KW"/>
</dbReference>
<dbReference type="GO" id="GO:0016887">
    <property type="term" value="F:ATP hydrolysis activity"/>
    <property type="evidence" value="ECO:0007669"/>
    <property type="project" value="InterPro"/>
</dbReference>
<dbReference type="CDD" id="cd19505">
    <property type="entry name" value="RecA-like_Ycf2"/>
    <property type="match status" value="1"/>
</dbReference>
<dbReference type="Gene3D" id="3.40.50.300">
    <property type="entry name" value="P-loop containing nucleotide triphosphate hydrolases"/>
    <property type="match status" value="1"/>
</dbReference>
<dbReference type="HAMAP" id="MF_01330">
    <property type="entry name" value="Ycf2"/>
    <property type="match status" value="1"/>
</dbReference>
<dbReference type="InterPro" id="IPR003593">
    <property type="entry name" value="AAA+_ATPase"/>
</dbReference>
<dbReference type="InterPro" id="IPR003959">
    <property type="entry name" value="ATPase_AAA_core"/>
</dbReference>
<dbReference type="InterPro" id="IPR027417">
    <property type="entry name" value="P-loop_NTPase"/>
</dbReference>
<dbReference type="InterPro" id="IPR008543">
    <property type="entry name" value="Uncharacterised_Ycf2"/>
</dbReference>
<dbReference type="InterPro" id="IPR056777">
    <property type="entry name" value="Ycf2_N"/>
</dbReference>
<dbReference type="PANTHER" id="PTHR33078:SF51">
    <property type="entry name" value="PROTEIN TIC 214"/>
    <property type="match status" value="1"/>
</dbReference>
<dbReference type="PANTHER" id="PTHR33078">
    <property type="entry name" value="PROTEIN YCF2-RELATED"/>
    <property type="match status" value="1"/>
</dbReference>
<dbReference type="Pfam" id="PF00004">
    <property type="entry name" value="AAA"/>
    <property type="match status" value="1"/>
</dbReference>
<dbReference type="Pfam" id="PF05695">
    <property type="entry name" value="Ycf2"/>
    <property type="match status" value="1"/>
</dbReference>
<dbReference type="SMART" id="SM00382">
    <property type="entry name" value="AAA"/>
    <property type="match status" value="1"/>
</dbReference>
<dbReference type="SUPFAM" id="SSF52540">
    <property type="entry name" value="P-loop containing nucleoside triphosphate hydrolases"/>
    <property type="match status" value="1"/>
</dbReference>
<feature type="chain" id="PRO_0000223056" description="Protein Ycf2">
    <location>
        <begin position="1"/>
        <end position="2278"/>
    </location>
</feature>
<protein>
    <recommendedName>
        <fullName>Protein Ycf2</fullName>
    </recommendedName>
</protein>
<gene>
    <name type="primary">ycf2-A</name>
</gene>
<gene>
    <name type="primary">ycf2-B</name>
</gene>
<reference key="1">
    <citation type="journal article" date="2006" name="Theor. Appl. Genet.">
        <title>Complete chloroplast genome sequences of Solanum bulbocastanum, Solanum lycopersicum and comparative analyses with other Solanaceae genomes.</title>
        <authorList>
            <person name="Daniell H."/>
            <person name="Lee S.-B."/>
            <person name="Grevich J."/>
            <person name="Saski C."/>
            <person name="Quesada-Vargas T."/>
            <person name="Guda C."/>
            <person name="Tomkins J."/>
            <person name="Jansen R.K."/>
        </authorList>
    </citation>
    <scope>NUCLEOTIDE SEQUENCE [LARGE SCALE GENOMIC DNA]</scope>
    <source>
        <strain>cv. LA3023</strain>
    </source>
</reference>
<reference key="2">
    <citation type="journal article" date="2006" name="J. Mol. Evol.">
        <title>Sequence of the tomato chloroplast DNA and evolutionary comparison of solanaceous plastid genomes.</title>
        <authorList>
            <person name="Kahlau S."/>
            <person name="Aspinall S."/>
            <person name="Gray J.C."/>
            <person name="Bock R."/>
        </authorList>
    </citation>
    <scope>NUCLEOTIDE SEQUENCE [LARGE SCALE GENOMIC DNA]</scope>
    <source>
        <strain>cv. IPA-6</strain>
    </source>
</reference>
<reference key="3">
    <citation type="journal article" date="1991" name="Plant Mol. Biol.">
        <title>Survey of plastid RNA abundance during tomato fruit ripening: the amounts of RNA from the ORF 2280 region increase in chromoplasts.</title>
        <authorList>
            <person name="Richards C.M."/>
            <person name="Hinman S.B."/>
            <person name="Boyer C.D."/>
            <person name="Hardison R.C."/>
        </authorList>
    </citation>
    <scope>NUCLEOTIDE SEQUENCE [GENOMIC DNA] OF 2124-2155</scope>
    <source>
        <strain>cv. Count II</strain>
        <strain>cv. Traveler 76</strain>
        <tissue>Fruit</tissue>
    </source>
</reference>
<reference key="4">
    <citation type="journal article" date="1994" name="Curr. Genet.">
        <title>Expression of the large plastid gene, ORF2280, in tomato fruits and flowers.</title>
        <authorList>
            <person name="Richards C.M."/>
            <person name="Hardison R.C."/>
            <person name="Boyer C.D."/>
        </authorList>
    </citation>
    <scope>DETECTION OF THE PROTEIN</scope>
    <source>
        <strain>cv. Count II</strain>
        <tissue>Flower</tissue>
        <tissue>Fruit</tissue>
        <tissue>Green leaf</tissue>
    </source>
</reference>
<geneLocation type="chloroplast"/>
<organism>
    <name type="scientific">Solanum lycopersicum</name>
    <name type="common">Tomato</name>
    <name type="synonym">Lycopersicon esculentum</name>
    <dbReference type="NCBI Taxonomy" id="4081"/>
    <lineage>
        <taxon>Eukaryota</taxon>
        <taxon>Viridiplantae</taxon>
        <taxon>Streptophyta</taxon>
        <taxon>Embryophyta</taxon>
        <taxon>Tracheophyta</taxon>
        <taxon>Spermatophyta</taxon>
        <taxon>Magnoliopsida</taxon>
        <taxon>eudicotyledons</taxon>
        <taxon>Gunneridae</taxon>
        <taxon>Pentapetalae</taxon>
        <taxon>asterids</taxon>
        <taxon>lamiids</taxon>
        <taxon>Solanales</taxon>
        <taxon>Solanaceae</taxon>
        <taxon>Solanoideae</taxon>
        <taxon>Solaneae</taxon>
        <taxon>Solanum</taxon>
        <taxon>Solanum subgen. Lycopersicon</taxon>
    </lineage>
</organism>
<sequence length="2278" mass="266462">MRGHQFKSWIFELREILREIKNSHHFLDSWTQFNSVGSFIHIFFHQERFLKLFDPRIWSILLSRNSQGSPSNRYFTIKGVILFVVAVLIYRINNRNMVERKNLYLIGLLPIPMNSIGPRNDTLEESVGSSNINRLIVSLLYLPKGKKISESCFLNPKESTWVLPITKKCSMPESNWGSRWWRNWIGKKRDSSCKISNETVAGIEILFKEKDLKYLEFLFVYYMDDPIRKDHDWELFDRLSLRKSRNRINLNSGPLFEILVKHWISYLMSAFREKIPIEVEGFFKQQGAGSTIQSNDIEHVSHLFSRNKWAISLQNCAQFHMWQFRQDLFVSWGKNPPESDFLRNVSRENWIWLDNVWLVNKDRFFSKVQNVSSNIQYDSTRSSFVQVTDSSQLKGSSDQSRDHLDSISNEDSEYHTLINQREIQQRKERSILWDPSFLQTERKEIESGRFPKCLSGYSSMSRLFTEREKQMINHLFPEEIEEFLGNPTRSVRSFFSDRWSELHLGSNPTERSTRDQKLLKKQQDLSFVPSRRSEKKEMVNIFKIITYLQNTVSIHPISSDPGCDMVPKDEPDMDSSNKISFLNKNPFFDLFHLFHDRNRGGYTLHYDFASEERFQEMADLFTLSITEPDLVYHKGFAFSIDSCGLDQKQFLNEARDESKKKSLLVLPPIFYEENESFSRRIRKKWVRISCGNDLEDPKPKIVVFASNNIMEAVTQYRLIRNLIQIQYSTYGYIRNVLNRFFLMNRSDRNFEYGIQRDQIGKDTLNHRTIMKYTINQYLSNLKKSQKKWFEPLILISRTERSMNRDPDAYRYKWSNGSKSFQEHLEQSVSKQKSRFQVVFDRLRINQYSIDWSEVIDKKDLSKSLRFFLSKSLLFLSKLLLFLSNSLPFFCVSFGNIPIHRSEIYIYEELKGPNDQLCNQLLESIGLQIVHLKKLKPFLLDDHDTSQKSKFLINGGTISPFLFNKIPKWMIDSFHTRNNRRKSFDNPDSYFSMIFHDQDNWLNPVKPFHRSSLISSFYKANRLRFLNNPHHFCFYWNTRFPFSVEKARINNSDFTYGQFLNILFIRNKIFSLCVGKKKHAFWGRDTISPIESQVSNIFIPNDFPQSGDETYNLYKSFHFPSRSDPFVRRAIYSIADISGTPLTEGQIVNFERTYCQPLSDMNLSDSEGKNLHQYLNFNSNMGLIHTPCSEKDLSSEKRKKWSLCLKKCVEKGQTYRTFQRDSAFSTLSKWNLFQTYMPWFLTSTGYKYLNLIFLDTFSDLLPILSSSQKFVSIFPDIMHGSGISWRILQKKLCLPQWNLISEISSKCLHNLLLSEEMIHRNNESPLISTHLRSPNAREFLYSILFLLLVAGYLVRTHLLFVSRASSELQTEFERVKSLMTPSSMIELRKLLDRYPTSEPNSFWLKNLFLVALEQLGDSLEEIRGSASGGNMLGPAYGVKSIRSKKKDWNINLIEIIDLIPNPINRITFSRNTRHLSHTSKEIYSLIRKRKNVNGDWIDEKIESWVANSDSIDDEEREFLVQFSTLTTENRIDQILLSLTHSDHLSKNDSGYQMIEQPGAIYLRYLVDIHKKHLMNYEFNPSCLAERRIFLAHYQTITYSQTSCGENSFHFPSHGKPFSLRLALSPSRGILVIGSIGTGRSYLVKYLATNSYVPFITVFLNKFLDNKSKGFLLDEIDIDDSDDIDDSDNLDASDDIDRDLDTELELLTRMNGLTVDMMPEIDRFYITLQFELAKAMSPCIIWIPNIHDLDVNESNDLSLGLLVNHLSRDCERCSTRNILVIASTHIPQKVDPALIAPNKLNTCIKIRRLLIPQQRKHFFTLSYTRGFHLEKKMFHTNGFGSITMGSNARDLVALTNEVLSISITQKKSIIDTNTIRSALHRQTWDLRSQVRSVQDHGILFYQIGRAVAQNVLLSNCPIDPISIYMKKKSCNEGDSYLYKWYFELGTSMKRLTILLYLLSCSAGSVAQDLWSLSVPDEKNGITSYGLVENDSDLVHGLLEVEGALVGSSRTEKDCSQFDNDRVTLLLRPEPRNPLDMMQKGSWSILDQRFLYEKYESEFEEGEGEGALDPQEDLFNHIVWAPRIWRPWGFLFDCIERPNELGFPYWSRSFRGKRIIYDEEDELQENDSGFLQSGTMQYQTRDRSQGLFRISQFIWDPADPLFFLFKDQPPGSVFSHRELFADEEMSKGLLTSQTDPPTSLYKRWFIKNTQEKHFELLINRQRWLRTNSSLSNGSFRSNTLSESYQYLSNLFLSNGTLLDQMPKTLLRKRWLFPDEMKIGFM</sequence>
<keyword id="KW-0067">ATP-binding</keyword>
<keyword id="KW-0150">Chloroplast</keyword>
<keyword id="KW-0957">Chromoplast</keyword>
<keyword id="KW-0547">Nucleotide-binding</keyword>
<keyword id="KW-0934">Plastid</keyword>
<keyword id="KW-1185">Reference proteome</keyword>
<proteinExistence type="evidence at transcript level"/>
<accession>P61242</accession>
<accession>Q2A7A6</accession>
<accession>Q2MI38</accession>
<comment type="function">
    <text>Probable ATPase of unknown function. Its presence in a non-photosynthetic plant (Epifagus virginiana) and experiments in tobacco indicate that it has an essential function which is probably not related to photosynthesis.</text>
</comment>
<comment type="subcellular location">
    <subcellularLocation>
        <location>Plastid</location>
        <location>Chloroplast stroma</location>
    </subcellularLocation>
    <subcellularLocation>
        <location>Plastid</location>
        <location>Chromoplast stroma</location>
    </subcellularLocation>
</comment>
<comment type="developmental stage">
    <text>Very little protein is seen in green leaves, the proteins detected were 170, 140 and 110 kDa. 170, 68 and 59 kDa proteins are seen in immature fruit, while more mature fruit and flowers have only the 68 and 59 kDa proteins. It is not clear which parts of the protein are stably expressed.</text>
</comment>
<comment type="similarity">
    <text evidence="1">Belongs to the Ycf2 family.</text>
</comment>
<name>YCF2_SOLLC</name>